<protein>
    <recommendedName>
        <fullName evidence="4">Dihydromethanopterin reductase (acceptor)</fullName>
        <shortName evidence="4">H(2)MPT reductase</shortName>
        <ecNumber evidence="3">1.5.99.15</ecNumber>
    </recommendedName>
</protein>
<proteinExistence type="evidence at protein level"/>
<evidence type="ECO:0000250" key="1"/>
<evidence type="ECO:0000255" key="2">
    <source>
        <dbReference type="PROSITE-ProRule" id="PRU00711"/>
    </source>
</evidence>
<evidence type="ECO:0000269" key="3">
    <source>
    </source>
</evidence>
<evidence type="ECO:0000303" key="4">
    <source>
    </source>
</evidence>
<evidence type="ECO:0000305" key="5"/>
<name>DMRX_METJA</name>
<dbReference type="EC" id="1.5.99.15" evidence="3"/>
<dbReference type="EMBL" id="L77117">
    <property type="protein sequence ID" value="AAB98191.1"/>
    <property type="molecule type" value="Genomic_DNA"/>
</dbReference>
<dbReference type="PIR" id="A64326">
    <property type="entry name" value="A64326"/>
</dbReference>
<dbReference type="SMR" id="Q57661"/>
<dbReference type="FunCoup" id="Q57661">
    <property type="interactions" value="110"/>
</dbReference>
<dbReference type="STRING" id="243232.MJ_0208"/>
<dbReference type="PaxDb" id="243232-MJ_0208"/>
<dbReference type="EnsemblBacteria" id="AAB98191">
    <property type="protein sequence ID" value="AAB98191"/>
    <property type="gene ID" value="MJ_0208"/>
</dbReference>
<dbReference type="KEGG" id="mja:MJ_0208"/>
<dbReference type="eggNOG" id="arCOG01705">
    <property type="taxonomic scope" value="Archaea"/>
</dbReference>
<dbReference type="HOGENOM" id="CLU_098523_0_0_2"/>
<dbReference type="InParanoid" id="Q57661"/>
<dbReference type="OrthoDB" id="23478at2157"/>
<dbReference type="PhylomeDB" id="Q57661"/>
<dbReference type="BRENDA" id="1.5.99.15">
    <property type="organism ID" value="3260"/>
</dbReference>
<dbReference type="UniPathway" id="UPA00065"/>
<dbReference type="Proteomes" id="UP000000805">
    <property type="component" value="Chromosome"/>
</dbReference>
<dbReference type="GO" id="GO:0051539">
    <property type="term" value="F:4 iron, 4 sulfur cluster binding"/>
    <property type="evidence" value="ECO:0000314"/>
    <property type="project" value="UniProtKB"/>
</dbReference>
<dbReference type="GO" id="GO:0044684">
    <property type="term" value="F:dihydromethanopterin reductase activity"/>
    <property type="evidence" value="ECO:0007669"/>
    <property type="project" value="UniProtKB-EC"/>
</dbReference>
<dbReference type="GO" id="GO:0046872">
    <property type="term" value="F:metal ion binding"/>
    <property type="evidence" value="ECO:0007669"/>
    <property type="project" value="UniProtKB-KW"/>
</dbReference>
<dbReference type="GO" id="GO:0016645">
    <property type="term" value="F:oxidoreductase activity, acting on the CH-NH group of donors"/>
    <property type="evidence" value="ECO:0000314"/>
    <property type="project" value="UniProtKB"/>
</dbReference>
<dbReference type="GO" id="GO:1901285">
    <property type="term" value="P:5,6,7,8-tetrahydromethanopterin biosynthetic process"/>
    <property type="evidence" value="ECO:0000314"/>
    <property type="project" value="UniProtKB"/>
</dbReference>
<dbReference type="Gene3D" id="3.30.70.3270">
    <property type="match status" value="1"/>
</dbReference>
<dbReference type="Gene3D" id="3.40.50.1950">
    <property type="entry name" value="Flavin prenyltransferase-like"/>
    <property type="match status" value="1"/>
</dbReference>
<dbReference type="InterPro" id="IPR017896">
    <property type="entry name" value="4Fe4S_Fe-S-bd"/>
</dbReference>
<dbReference type="InterPro" id="IPR017900">
    <property type="entry name" value="4Fe4S_Fe_S_CS"/>
</dbReference>
<dbReference type="InterPro" id="IPR014073">
    <property type="entry name" value="DmrX"/>
</dbReference>
<dbReference type="InterPro" id="IPR036551">
    <property type="entry name" value="Flavin_trans-like"/>
</dbReference>
<dbReference type="InterPro" id="IPR003382">
    <property type="entry name" value="Flavoprotein"/>
</dbReference>
<dbReference type="InterPro" id="IPR050157">
    <property type="entry name" value="PSI_iron-sulfur_center"/>
</dbReference>
<dbReference type="NCBIfam" id="TIGR02700">
    <property type="entry name" value="flavo_MJ0208"/>
    <property type="match status" value="1"/>
</dbReference>
<dbReference type="PANTHER" id="PTHR24960">
    <property type="entry name" value="PHOTOSYSTEM I IRON-SULFUR CENTER-RELATED"/>
    <property type="match status" value="1"/>
</dbReference>
<dbReference type="PANTHER" id="PTHR24960:SF85">
    <property type="entry name" value="POLYFERREDOXIN PROTEIN VHUB"/>
    <property type="match status" value="1"/>
</dbReference>
<dbReference type="Pfam" id="PF12838">
    <property type="entry name" value="Fer4_7"/>
    <property type="match status" value="1"/>
</dbReference>
<dbReference type="Pfam" id="PF02441">
    <property type="entry name" value="Flavoprotein"/>
    <property type="match status" value="1"/>
</dbReference>
<dbReference type="SUPFAM" id="SSF54862">
    <property type="entry name" value="4Fe-4S ferredoxins"/>
    <property type="match status" value="1"/>
</dbReference>
<dbReference type="PROSITE" id="PS00198">
    <property type="entry name" value="4FE4S_FER_1"/>
    <property type="match status" value="2"/>
</dbReference>
<dbReference type="PROSITE" id="PS51379">
    <property type="entry name" value="4FE4S_FER_2"/>
    <property type="match status" value="2"/>
</dbReference>
<accession>Q57661</accession>
<keyword id="KW-0004">4Fe-4S</keyword>
<keyword id="KW-0249">Electron transport</keyword>
<keyword id="KW-0408">Iron</keyword>
<keyword id="KW-0411">Iron-sulfur</keyword>
<keyword id="KW-0479">Metal-binding</keyword>
<keyword id="KW-0560">Oxidoreductase</keyword>
<keyword id="KW-1185">Reference proteome</keyword>
<keyword id="KW-0677">Repeat</keyword>
<keyword id="KW-0813">Transport</keyword>
<organism>
    <name type="scientific">Methanocaldococcus jannaschii (strain ATCC 43067 / DSM 2661 / JAL-1 / JCM 10045 / NBRC 100440)</name>
    <name type="common">Methanococcus jannaschii</name>
    <dbReference type="NCBI Taxonomy" id="243232"/>
    <lineage>
        <taxon>Archaea</taxon>
        <taxon>Methanobacteriati</taxon>
        <taxon>Methanobacteriota</taxon>
        <taxon>Methanomada group</taxon>
        <taxon>Methanococci</taxon>
        <taxon>Methanococcales</taxon>
        <taxon>Methanocaldococcaceae</taxon>
        <taxon>Methanocaldococcus</taxon>
    </lineage>
</organism>
<gene>
    <name evidence="4" type="primary">dmrX</name>
    <name type="ordered locus">MJ0208</name>
</gene>
<feature type="chain" id="PRO_0000159308" description="Dihydromethanopterin reductase (acceptor)">
    <location>
        <begin position="1"/>
        <end position="246"/>
    </location>
</feature>
<feature type="domain" description="4Fe-4S ferredoxin-type 1" evidence="2">
    <location>
        <begin position="150"/>
        <end position="178"/>
    </location>
</feature>
<feature type="domain" description="4Fe-4S ferredoxin-type 2" evidence="2">
    <location>
        <begin position="179"/>
        <end position="208"/>
    </location>
</feature>
<feature type="binding site" evidence="1">
    <location>
        <position position="159"/>
    </location>
    <ligand>
        <name>[4Fe-4S] cluster</name>
        <dbReference type="ChEBI" id="CHEBI:49883"/>
        <label>1</label>
    </ligand>
</feature>
<feature type="binding site" evidence="1">
    <location>
        <position position="162"/>
    </location>
    <ligand>
        <name>[4Fe-4S] cluster</name>
        <dbReference type="ChEBI" id="CHEBI:49883"/>
        <label>1</label>
    </ligand>
</feature>
<feature type="binding site" evidence="1">
    <location>
        <position position="165"/>
    </location>
    <ligand>
        <name>[4Fe-4S] cluster</name>
        <dbReference type="ChEBI" id="CHEBI:49883"/>
        <label>1</label>
    </ligand>
</feature>
<feature type="binding site" evidence="1">
    <location>
        <position position="169"/>
    </location>
    <ligand>
        <name>[4Fe-4S] cluster</name>
        <dbReference type="ChEBI" id="CHEBI:49883"/>
        <label>2</label>
    </ligand>
</feature>
<feature type="binding site" evidence="1">
    <location>
        <position position="188"/>
    </location>
    <ligand>
        <name>[4Fe-4S] cluster</name>
        <dbReference type="ChEBI" id="CHEBI:49883"/>
        <label>2</label>
    </ligand>
</feature>
<feature type="binding site" evidence="1">
    <location>
        <position position="191"/>
    </location>
    <ligand>
        <name>[4Fe-4S] cluster</name>
        <dbReference type="ChEBI" id="CHEBI:49883"/>
        <label>2</label>
    </ligand>
</feature>
<feature type="binding site" evidence="1">
    <location>
        <position position="194"/>
    </location>
    <ligand>
        <name>[4Fe-4S] cluster</name>
        <dbReference type="ChEBI" id="CHEBI:49883"/>
        <label>2</label>
    </ligand>
</feature>
<feature type="binding site" evidence="1">
    <location>
        <position position="198"/>
    </location>
    <ligand>
        <name>[4Fe-4S] cluster</name>
        <dbReference type="ChEBI" id="CHEBI:49883"/>
        <label>1</label>
    </ligand>
</feature>
<reference key="1">
    <citation type="journal article" date="1996" name="Science">
        <title>Complete genome sequence of the methanogenic archaeon, Methanococcus jannaschii.</title>
        <authorList>
            <person name="Bult C.J."/>
            <person name="White O."/>
            <person name="Olsen G.J."/>
            <person name="Zhou L."/>
            <person name="Fleischmann R.D."/>
            <person name="Sutton G.G."/>
            <person name="Blake J.A."/>
            <person name="FitzGerald L.M."/>
            <person name="Clayton R.A."/>
            <person name="Gocayne J.D."/>
            <person name="Kerlavage A.R."/>
            <person name="Dougherty B.A."/>
            <person name="Tomb J.-F."/>
            <person name="Adams M.D."/>
            <person name="Reich C.I."/>
            <person name="Overbeek R."/>
            <person name="Kirkness E.F."/>
            <person name="Weinstock K.G."/>
            <person name="Merrick J.M."/>
            <person name="Glodek A."/>
            <person name="Scott J.L."/>
            <person name="Geoghagen N.S.M."/>
            <person name="Weidman J.F."/>
            <person name="Fuhrmann J.L."/>
            <person name="Nguyen D."/>
            <person name="Utterback T.R."/>
            <person name="Kelley J.M."/>
            <person name="Peterson J.D."/>
            <person name="Sadow P.W."/>
            <person name="Hanna M.C."/>
            <person name="Cotton M.D."/>
            <person name="Roberts K.M."/>
            <person name="Hurst M.A."/>
            <person name="Kaine B.P."/>
            <person name="Borodovsky M."/>
            <person name="Klenk H.-P."/>
            <person name="Fraser C.M."/>
            <person name="Smith H.O."/>
            <person name="Woese C.R."/>
            <person name="Venter J.C."/>
        </authorList>
    </citation>
    <scope>NUCLEOTIDE SEQUENCE [LARGE SCALE GENOMIC DNA]</scope>
    <source>
        <strain>ATCC 43067 / DSM 2661 / JAL-1 / JCM 10045 / NBRC 100440</strain>
    </source>
</reference>
<reference key="2">
    <citation type="journal article" date="2014" name="J. Bacteriol.">
        <title>Discovery and characterization of the first archaeal dihydromethanopterin reductase, an iron-sulfur flavoprotein from Methanosarcina mazei.</title>
        <authorList>
            <person name="Wang S."/>
            <person name="Tiongson J."/>
            <person name="Rasche M.E."/>
        </authorList>
    </citation>
    <scope>FUNCTION</scope>
    <scope>CATALYTIC ACTIVITY</scope>
    <scope>SUBUNIT</scope>
    <scope>COFACTOR</scope>
</reference>
<comment type="function">
    <text evidence="3">Involved in the biosynthesis of tetrahydromethanopterin, a coenzyme used in methanogenesis. Catalyzes the reduction of dihydromethanopterin (H(2)MPT) to tetrahydromethanopterin (H(4)MPT). Ferredoxin may serve as an electron donor.</text>
</comment>
<comment type="catalytic activity">
    <reaction evidence="3">
        <text>5,6,7,8-tetrahydromethanopterin + A = 7,8-dihydromethanopterin + AH2</text>
        <dbReference type="Rhea" id="RHEA:42804"/>
        <dbReference type="ChEBI" id="CHEBI:13193"/>
        <dbReference type="ChEBI" id="CHEBI:17499"/>
        <dbReference type="ChEBI" id="CHEBI:58103"/>
        <dbReference type="ChEBI" id="CHEBI:72788"/>
        <dbReference type="EC" id="1.5.99.15"/>
    </reaction>
</comment>
<comment type="cofactor">
    <cofactor evidence="4">
        <name>[4Fe-4S] cluster</name>
        <dbReference type="ChEBI" id="CHEBI:49883"/>
    </cofactor>
    <text evidence="4">Binds 2 [4Fe-4S] clusters per subunit.</text>
</comment>
<comment type="pathway">
    <text evidence="5">Cofactor biosynthesis; 5,6,7,8-tetrahydromethanopterin biosynthesis.</text>
</comment>
<comment type="subunit">
    <text evidence="3">Homodimer.</text>
</comment>
<sequence>MNYRFGINMKIVWCITGAGHLLRESFQVMKRLKEEIEDLKVTTLVSRAGEEVVKMYGLFGELYNISNGNYYEELILEREHPYSSPITGRLSLGKYDYLICSPATGNTVAKVVNGIADSLVTNAIAQAGKGFVKSLIVPVDYKAGIVTTKLPYAIDKKKCKLCLKCINVCPNGAIVKRDNFVEILLSKCLGCGNCKKVCPYNAIIEGKEIKMRVRKIDAENTRKLMELEDVIVLKHPYEILEFFNIR</sequence>